<name>EIX_PEND1</name>
<feature type="signal peptide" evidence="2">
    <location>
        <begin position="1"/>
        <end position="19"/>
    </location>
</feature>
<feature type="chain" id="PRO_5003929400" description="Ethylene-inducing xylanase">
    <location>
        <begin position="20"/>
        <end position="216"/>
    </location>
</feature>
<feature type="domain" description="GH11" evidence="3">
    <location>
        <begin position="28"/>
        <end position="216"/>
    </location>
</feature>
<feature type="active site" description="Nucleophile" evidence="3">
    <location>
        <position position="112"/>
    </location>
</feature>
<feature type="active site" description="Proton donor" evidence="3">
    <location>
        <position position="203"/>
    </location>
</feature>
<sequence length="216" mass="23362">MVSFSSLFVAACAAVTAFALPSELEKRAITTSQQGTSNGYFYSFWTNGGGSVSYNNGASGEYSVSWSNCGSFTSGKGWATGSSRNINFSGSFKPSGNAYLAVYGWTTSPLVEYYIMENYGDYNPGRSMTFKGTVTSDGSVYDIYTHQQVNQPSISGTATFEQYWSIRRTKRSSGTVTTANHFKAWASHGMYLGSHNYQIVSTEGYQSSGSSDITVS</sequence>
<gene>
    <name evidence="5" type="primary">EIX</name>
    <name type="ORF">PDIP_02920</name>
</gene>
<protein>
    <recommendedName>
        <fullName evidence="5">Ethylene-inducing xylanase</fullName>
        <shortName evidence="5">EIX</shortName>
        <ecNumber evidence="3">3.2.1.8</ecNumber>
    </recommendedName>
    <alternativeName>
        <fullName evidence="5">Endo-1,4-beta-xylanase EIX</fullName>
    </alternativeName>
</protein>
<dbReference type="EC" id="3.2.1.8" evidence="3"/>
<dbReference type="EMBL" id="AKCU01000024">
    <property type="protein sequence ID" value="EKV21815.1"/>
    <property type="molecule type" value="Genomic_DNA"/>
</dbReference>
<dbReference type="RefSeq" id="XP_014539041.1">
    <property type="nucleotide sequence ID" value="XM_014683555.1"/>
</dbReference>
<dbReference type="SMR" id="K9GHZ3"/>
<dbReference type="GeneID" id="26228615"/>
<dbReference type="KEGG" id="pdp:PDIP_02920"/>
<dbReference type="VEuPathDB" id="FungiDB:PDIP_02920"/>
<dbReference type="HOGENOM" id="CLU_052631_0_0_1"/>
<dbReference type="OrthoDB" id="2115822at2759"/>
<dbReference type="UniPathway" id="UPA00114"/>
<dbReference type="Proteomes" id="UP000009886">
    <property type="component" value="Unassembled WGS sequence"/>
</dbReference>
<dbReference type="GO" id="GO:0005576">
    <property type="term" value="C:extracellular region"/>
    <property type="evidence" value="ECO:0007669"/>
    <property type="project" value="UniProtKB-SubCell"/>
</dbReference>
<dbReference type="GO" id="GO:0031176">
    <property type="term" value="F:endo-1,4-beta-xylanase activity"/>
    <property type="evidence" value="ECO:0007669"/>
    <property type="project" value="UniProtKB-UniRule"/>
</dbReference>
<dbReference type="GO" id="GO:0045493">
    <property type="term" value="P:xylan catabolic process"/>
    <property type="evidence" value="ECO:0007669"/>
    <property type="project" value="UniProtKB-UniRule"/>
</dbReference>
<dbReference type="FunFam" id="2.60.120.180:FF:000001">
    <property type="entry name" value="Endo-1,4-beta-xylanase"/>
    <property type="match status" value="1"/>
</dbReference>
<dbReference type="Gene3D" id="2.60.120.180">
    <property type="match status" value="1"/>
</dbReference>
<dbReference type="InterPro" id="IPR013320">
    <property type="entry name" value="ConA-like_dom_sf"/>
</dbReference>
<dbReference type="InterPro" id="IPR013319">
    <property type="entry name" value="GH11/12"/>
</dbReference>
<dbReference type="InterPro" id="IPR018208">
    <property type="entry name" value="GH11_AS_1"/>
</dbReference>
<dbReference type="InterPro" id="IPR033119">
    <property type="entry name" value="GH11_AS_2"/>
</dbReference>
<dbReference type="InterPro" id="IPR033123">
    <property type="entry name" value="GH11_dom"/>
</dbReference>
<dbReference type="InterPro" id="IPR001137">
    <property type="entry name" value="Glyco_hydro_11"/>
</dbReference>
<dbReference type="PANTHER" id="PTHR46828:SF4">
    <property type="entry name" value="ENDO-1,4-BETA-XYLANASE"/>
    <property type="match status" value="1"/>
</dbReference>
<dbReference type="PANTHER" id="PTHR46828">
    <property type="entry name" value="ENDO-1,4-BETA-XYLANASE A-RELATED"/>
    <property type="match status" value="1"/>
</dbReference>
<dbReference type="Pfam" id="PF00457">
    <property type="entry name" value="Glyco_hydro_11"/>
    <property type="match status" value="1"/>
</dbReference>
<dbReference type="PRINTS" id="PR00911">
    <property type="entry name" value="GLHYDRLASE11"/>
</dbReference>
<dbReference type="SUPFAM" id="SSF49899">
    <property type="entry name" value="Concanavalin A-like lectins/glucanases"/>
    <property type="match status" value="1"/>
</dbReference>
<dbReference type="PROSITE" id="PS00776">
    <property type="entry name" value="GH11_1"/>
    <property type="match status" value="1"/>
</dbReference>
<dbReference type="PROSITE" id="PS00777">
    <property type="entry name" value="GH11_2"/>
    <property type="match status" value="1"/>
</dbReference>
<dbReference type="PROSITE" id="PS51761">
    <property type="entry name" value="GH11_3"/>
    <property type="match status" value="1"/>
</dbReference>
<evidence type="ECO:0000250" key="1">
    <source>
        <dbReference type="UniProtKB" id="B3VSG7"/>
    </source>
</evidence>
<evidence type="ECO:0000255" key="2"/>
<evidence type="ECO:0000255" key="3">
    <source>
        <dbReference type="PROSITE-ProRule" id="PRU01097"/>
    </source>
</evidence>
<evidence type="ECO:0000269" key="4">
    <source>
    </source>
</evidence>
<evidence type="ECO:0000303" key="5">
    <source>
    </source>
</evidence>
<proteinExistence type="inferred from homology"/>
<comment type="function">
    <text evidence="1 4">Endo-1,4-beta-xylanase involved in the hydrolysis of xylan, a major structural heterogeneous polysaccharide found in plant biomass representing the second most abundant polysaccharide in the biosphere, after cellulose (By similarity). Acts as a pathogen-associated molecular pattern (PAMP) that can trigger plant cell death (PubMed:39718348). Triggers a series of immune responses in citrus fruit and enhanced the resistance of citrus and other fruit against fungal pathogens (PubMed:39718348).</text>
</comment>
<comment type="catalytic activity">
    <reaction evidence="3">
        <text>Endohydrolysis of (1-&gt;4)-beta-D-xylosidic linkages in xylans.</text>
        <dbReference type="EC" id="3.2.1.8"/>
    </reaction>
</comment>
<comment type="pathway">
    <text evidence="3">Glycan degradation; xylan degradation.</text>
</comment>
<comment type="subcellular location">
    <subcellularLocation>
        <location evidence="4">Secreted</location>
    </subcellularLocation>
</comment>
<comment type="similarity">
    <text evidence="3">Belongs to the glycosyl hydrolase 11 (cellulase G) family.</text>
</comment>
<organism>
    <name type="scientific">Penicillium digitatum (strain Pd1 / CECT 20795)</name>
    <name type="common">Green mold</name>
    <dbReference type="NCBI Taxonomy" id="1170230"/>
    <lineage>
        <taxon>Eukaryota</taxon>
        <taxon>Fungi</taxon>
        <taxon>Dikarya</taxon>
        <taxon>Ascomycota</taxon>
        <taxon>Pezizomycotina</taxon>
        <taxon>Eurotiomycetes</taxon>
        <taxon>Eurotiomycetidae</taxon>
        <taxon>Eurotiales</taxon>
        <taxon>Aspergillaceae</taxon>
        <taxon>Penicillium</taxon>
    </lineage>
</organism>
<reference key="1">
    <citation type="journal article" date="2012" name="BMC Genomics">
        <title>Genome sequence of the necrotrophic fungus Penicillium digitatum, the main postharvest pathogen of citrus.</title>
        <authorList>
            <person name="Marcet-Houben M."/>
            <person name="Ballester A.-R."/>
            <person name="de la Fuente B."/>
            <person name="Harries E."/>
            <person name="Marcos J.F."/>
            <person name="Gonzalez-Candelas L."/>
            <person name="Gabaldon T."/>
        </authorList>
    </citation>
    <scope>NUCLEOTIDE SEQUENCE [LARGE SCALE GENOMIC DNA]</scope>
    <source>
        <strain>Pd1 / CECT 20795</strain>
    </source>
</reference>
<reference key="2">
    <citation type="journal article" date="2025" name="J. Agric. Food Chem.">
        <title>Enhancing Fruit Resistance against Fungal Pathogens Using a Pathogen-Associated Molecular Pattern PdEIX.</title>
        <authorList>
            <person name="He J."/>
            <person name="Li R."/>
            <person name="Xu C."/>
            <person name="Chen X."/>
            <person name="Yao J."/>
            <person name="Li Z."/>
            <person name="Cheng Y."/>
        </authorList>
    </citation>
    <scope>FUNCTION</scope>
    <scope>SUBCELLULAR LOCATION</scope>
</reference>
<keyword id="KW-0119">Carbohydrate metabolism</keyword>
<keyword id="KW-0326">Glycosidase</keyword>
<keyword id="KW-0378">Hydrolase</keyword>
<keyword id="KW-0624">Polysaccharide degradation</keyword>
<keyword id="KW-0964">Secreted</keyword>
<keyword id="KW-0732">Signal</keyword>
<keyword id="KW-0843">Virulence</keyword>
<keyword id="KW-0858">Xylan degradation</keyword>
<accession>K9GHZ3</accession>